<comment type="function">
    <text evidence="1">Transaldolase is important for the balance of metabolites in the pentose-phosphate pathway.</text>
</comment>
<comment type="catalytic activity">
    <reaction evidence="1">
        <text>D-sedoheptulose 7-phosphate + D-glyceraldehyde 3-phosphate = D-erythrose 4-phosphate + beta-D-fructose 6-phosphate</text>
        <dbReference type="Rhea" id="RHEA:17053"/>
        <dbReference type="ChEBI" id="CHEBI:16897"/>
        <dbReference type="ChEBI" id="CHEBI:57483"/>
        <dbReference type="ChEBI" id="CHEBI:57634"/>
        <dbReference type="ChEBI" id="CHEBI:59776"/>
        <dbReference type="EC" id="2.2.1.2"/>
    </reaction>
</comment>
<comment type="pathway">
    <text evidence="1">Carbohydrate degradation; pentose phosphate pathway; D-glyceraldehyde 3-phosphate and beta-D-fructose 6-phosphate from D-ribose 5-phosphate and D-xylulose 5-phosphate (non-oxidative stage): step 2/3.</text>
</comment>
<comment type="subcellular location">
    <subcellularLocation>
        <location evidence="1">Cytoplasm</location>
    </subcellularLocation>
</comment>
<comment type="similarity">
    <text evidence="1">Belongs to the transaldolase family. Type 3B subfamily.</text>
</comment>
<feature type="chain" id="PRO_0000173663" description="Probable transaldolase">
    <location>
        <begin position="1"/>
        <end position="222"/>
    </location>
</feature>
<feature type="active site" description="Schiff-base intermediate with substrate" evidence="1">
    <location>
        <position position="91"/>
    </location>
</feature>
<sequence>MKFFIDTASLDEIKAANELGVLDGVTTNPSLIAKIVKDSTNFTYADFKAHIAKICEIVDGPVSAEVTTLKAGEMIAQGEELAAIHKNIVVKCPLTVDGLKAIKHFSSNGIKTNATLVFSPTQALLAAKAGADFVSPFVGRLDDISTSGMELVRQIVTIYDNYGYLTEVIVASVRNPLHVVESAMVGADIATIPYSVIKQLANHPLTDKGLEKFMEDAAVMKP</sequence>
<evidence type="ECO:0000255" key="1">
    <source>
        <dbReference type="HAMAP-Rule" id="MF_00494"/>
    </source>
</evidence>
<name>TAL_CHLTE</name>
<reference key="1">
    <citation type="journal article" date="2002" name="Proc. Natl. Acad. Sci. U.S.A.">
        <title>The complete genome sequence of Chlorobium tepidum TLS, a photosynthetic, anaerobic, green-sulfur bacterium.</title>
        <authorList>
            <person name="Eisen J.A."/>
            <person name="Nelson K.E."/>
            <person name="Paulsen I.T."/>
            <person name="Heidelberg J.F."/>
            <person name="Wu M."/>
            <person name="Dodson R.J."/>
            <person name="DeBoy R.T."/>
            <person name="Gwinn M.L."/>
            <person name="Nelson W.C."/>
            <person name="Haft D.H."/>
            <person name="Hickey E.K."/>
            <person name="Peterson J.D."/>
            <person name="Durkin A.S."/>
            <person name="Kolonay J.F."/>
            <person name="Yang F."/>
            <person name="Holt I.E."/>
            <person name="Umayam L.A."/>
            <person name="Mason T.M."/>
            <person name="Brenner M."/>
            <person name="Shea T.P."/>
            <person name="Parksey D.S."/>
            <person name="Nierman W.C."/>
            <person name="Feldblyum T.V."/>
            <person name="Hansen C.L."/>
            <person name="Craven M.B."/>
            <person name="Radune D."/>
            <person name="Vamathevan J.J."/>
            <person name="Khouri H.M."/>
            <person name="White O."/>
            <person name="Gruber T.M."/>
            <person name="Ketchum K.A."/>
            <person name="Venter J.C."/>
            <person name="Tettelin H."/>
            <person name="Bryant D.A."/>
            <person name="Fraser C.M."/>
        </authorList>
    </citation>
    <scope>NUCLEOTIDE SEQUENCE [LARGE SCALE GENOMIC DNA]</scope>
    <source>
        <strain>ATCC 49652 / DSM 12025 / NBRC 103806 / TLS</strain>
    </source>
</reference>
<organism>
    <name type="scientific">Chlorobaculum tepidum (strain ATCC 49652 / DSM 12025 / NBRC 103806 / TLS)</name>
    <name type="common">Chlorobium tepidum</name>
    <dbReference type="NCBI Taxonomy" id="194439"/>
    <lineage>
        <taxon>Bacteria</taxon>
        <taxon>Pseudomonadati</taxon>
        <taxon>Chlorobiota</taxon>
        <taxon>Chlorobiia</taxon>
        <taxon>Chlorobiales</taxon>
        <taxon>Chlorobiaceae</taxon>
        <taxon>Chlorobaculum</taxon>
    </lineage>
</organism>
<proteinExistence type="inferred from homology"/>
<protein>
    <recommendedName>
        <fullName evidence="1">Probable transaldolase</fullName>
        <ecNumber evidence="1">2.2.1.2</ecNumber>
    </recommendedName>
</protein>
<gene>
    <name evidence="1" type="primary">tal</name>
    <name type="ordered locus">CT0010</name>
</gene>
<keyword id="KW-0963">Cytoplasm</keyword>
<keyword id="KW-0570">Pentose shunt</keyword>
<keyword id="KW-1185">Reference proteome</keyword>
<keyword id="KW-0704">Schiff base</keyword>
<keyword id="KW-0808">Transferase</keyword>
<accession>Q8KGF8</accession>
<dbReference type="EC" id="2.2.1.2" evidence="1"/>
<dbReference type="EMBL" id="AE006470">
    <property type="protein sequence ID" value="AAM71258.1"/>
    <property type="molecule type" value="Genomic_DNA"/>
</dbReference>
<dbReference type="RefSeq" id="NP_660916.1">
    <property type="nucleotide sequence ID" value="NC_002932.3"/>
</dbReference>
<dbReference type="RefSeq" id="WP_010931704.1">
    <property type="nucleotide sequence ID" value="NC_002932.3"/>
</dbReference>
<dbReference type="SMR" id="Q8KGF8"/>
<dbReference type="STRING" id="194439.CT0010"/>
<dbReference type="EnsemblBacteria" id="AAM71258">
    <property type="protein sequence ID" value="AAM71258"/>
    <property type="gene ID" value="CT0010"/>
</dbReference>
<dbReference type="KEGG" id="cte:CT0010"/>
<dbReference type="PATRIC" id="fig|194439.7.peg.10"/>
<dbReference type="eggNOG" id="COG0176">
    <property type="taxonomic scope" value="Bacteria"/>
</dbReference>
<dbReference type="HOGENOM" id="CLU_079764_0_0_10"/>
<dbReference type="OrthoDB" id="9807051at2"/>
<dbReference type="UniPathway" id="UPA00115">
    <property type="reaction ID" value="UER00414"/>
</dbReference>
<dbReference type="Proteomes" id="UP000001007">
    <property type="component" value="Chromosome"/>
</dbReference>
<dbReference type="GO" id="GO:0005737">
    <property type="term" value="C:cytoplasm"/>
    <property type="evidence" value="ECO:0007669"/>
    <property type="project" value="UniProtKB-SubCell"/>
</dbReference>
<dbReference type="GO" id="GO:0016832">
    <property type="term" value="F:aldehyde-lyase activity"/>
    <property type="evidence" value="ECO:0007669"/>
    <property type="project" value="InterPro"/>
</dbReference>
<dbReference type="GO" id="GO:0004801">
    <property type="term" value="F:transaldolase activity"/>
    <property type="evidence" value="ECO:0007669"/>
    <property type="project" value="UniProtKB-UniRule"/>
</dbReference>
<dbReference type="GO" id="GO:0005975">
    <property type="term" value="P:carbohydrate metabolic process"/>
    <property type="evidence" value="ECO:0007669"/>
    <property type="project" value="InterPro"/>
</dbReference>
<dbReference type="GO" id="GO:0006098">
    <property type="term" value="P:pentose-phosphate shunt"/>
    <property type="evidence" value="ECO:0007669"/>
    <property type="project" value="UniProtKB-UniRule"/>
</dbReference>
<dbReference type="CDD" id="cd00956">
    <property type="entry name" value="Transaldolase_FSA"/>
    <property type="match status" value="1"/>
</dbReference>
<dbReference type="FunFam" id="3.20.20.70:FF:000018">
    <property type="entry name" value="Probable transaldolase"/>
    <property type="match status" value="1"/>
</dbReference>
<dbReference type="Gene3D" id="3.20.20.70">
    <property type="entry name" value="Aldolase class I"/>
    <property type="match status" value="1"/>
</dbReference>
<dbReference type="HAMAP" id="MF_00494">
    <property type="entry name" value="Transaldolase_3b"/>
    <property type="match status" value="1"/>
</dbReference>
<dbReference type="InterPro" id="IPR013785">
    <property type="entry name" value="Aldolase_TIM"/>
</dbReference>
<dbReference type="InterPro" id="IPR001585">
    <property type="entry name" value="TAL/FSA"/>
</dbReference>
<dbReference type="InterPro" id="IPR022999">
    <property type="entry name" value="Transaldolase_3B"/>
</dbReference>
<dbReference type="InterPro" id="IPR004731">
    <property type="entry name" value="Transaldolase_3B/F6P_aldolase"/>
</dbReference>
<dbReference type="InterPro" id="IPR018225">
    <property type="entry name" value="Transaldolase_AS"/>
</dbReference>
<dbReference type="InterPro" id="IPR033919">
    <property type="entry name" value="TSA/FSA_arc/bac"/>
</dbReference>
<dbReference type="NCBIfam" id="TIGR00875">
    <property type="entry name" value="fsa_talC_mipB"/>
    <property type="match status" value="1"/>
</dbReference>
<dbReference type="PANTHER" id="PTHR10683:SF40">
    <property type="entry name" value="FRUCTOSE-6-PHOSPHATE ALDOLASE 1-RELATED"/>
    <property type="match status" value="1"/>
</dbReference>
<dbReference type="PANTHER" id="PTHR10683">
    <property type="entry name" value="TRANSALDOLASE"/>
    <property type="match status" value="1"/>
</dbReference>
<dbReference type="Pfam" id="PF00923">
    <property type="entry name" value="TAL_FSA"/>
    <property type="match status" value="1"/>
</dbReference>
<dbReference type="SUPFAM" id="SSF51569">
    <property type="entry name" value="Aldolase"/>
    <property type="match status" value="1"/>
</dbReference>
<dbReference type="PROSITE" id="PS01054">
    <property type="entry name" value="TRANSALDOLASE_1"/>
    <property type="match status" value="1"/>
</dbReference>